<comment type="function">
    <text evidence="1">Thiolesterase that catalyzes the hydrolysis of S-D-lactoyl-glutathione to form glutathione and D-lactic acid.</text>
</comment>
<comment type="catalytic activity">
    <reaction evidence="1">
        <text>an S-(2-hydroxyacyl)glutathione + H2O = a 2-hydroxy carboxylate + glutathione + H(+)</text>
        <dbReference type="Rhea" id="RHEA:21864"/>
        <dbReference type="ChEBI" id="CHEBI:15377"/>
        <dbReference type="ChEBI" id="CHEBI:15378"/>
        <dbReference type="ChEBI" id="CHEBI:57925"/>
        <dbReference type="ChEBI" id="CHEBI:58896"/>
        <dbReference type="ChEBI" id="CHEBI:71261"/>
        <dbReference type="EC" id="3.1.2.6"/>
    </reaction>
</comment>
<comment type="cofactor">
    <cofactor evidence="1">
        <name>Zn(2+)</name>
        <dbReference type="ChEBI" id="CHEBI:29105"/>
    </cofactor>
    <text evidence="1">Binds 2 Zn(2+) ions per subunit.</text>
</comment>
<comment type="pathway">
    <text evidence="1">Secondary metabolite metabolism; methylglyoxal degradation; (R)-lactate from methylglyoxal: step 2/2.</text>
</comment>
<comment type="subunit">
    <text evidence="1">Monomer.</text>
</comment>
<comment type="similarity">
    <text evidence="1">Belongs to the metallo-beta-lactamase superfamily. Glyoxalase II family.</text>
</comment>
<sequence length="254" mass="28682">MTILPISAFSDNYIWAFIDKIAGVLDCVDPGEAAPIIRFAQSNQLTLRTILLTHHHYDHIGGVDSLIKQWPSCKVYGPIDERINNVTHPIKQGQSVQVGSLHFHILFNPGHTSTHISYYEPQKGWLFCGDTLFSAGCGRVFDGTIEELHESLLLFKKLPRNTKVFCAHEYTLQNLKFAHTVEPCNSSVINYMQQILKQPSPCTLPSNIDLELSINPFLRTDKEQVKQYALSHGANSSDSLDVFKVLRNQKNSFK</sequence>
<proteinExistence type="inferred from homology"/>
<protein>
    <recommendedName>
        <fullName evidence="1">Hydroxyacylglutathione hydrolase</fullName>
        <ecNumber evidence="1">3.1.2.6</ecNumber>
    </recommendedName>
    <alternativeName>
        <fullName evidence="1">Glyoxalase II</fullName>
        <shortName evidence="1">Glx II</shortName>
    </alternativeName>
</protein>
<accession>A5IBE7</accession>
<organism>
    <name type="scientific">Legionella pneumophila (strain Corby)</name>
    <dbReference type="NCBI Taxonomy" id="400673"/>
    <lineage>
        <taxon>Bacteria</taxon>
        <taxon>Pseudomonadati</taxon>
        <taxon>Pseudomonadota</taxon>
        <taxon>Gammaproteobacteria</taxon>
        <taxon>Legionellales</taxon>
        <taxon>Legionellaceae</taxon>
        <taxon>Legionella</taxon>
    </lineage>
</organism>
<keyword id="KW-0378">Hydrolase</keyword>
<keyword id="KW-0479">Metal-binding</keyword>
<keyword id="KW-0862">Zinc</keyword>
<dbReference type="EC" id="3.1.2.6" evidence="1"/>
<dbReference type="EMBL" id="CP000675">
    <property type="protein sequence ID" value="ABQ54697.1"/>
    <property type="molecule type" value="Genomic_DNA"/>
</dbReference>
<dbReference type="RefSeq" id="WP_011946345.1">
    <property type="nucleotide sequence ID" value="NZ_JAPMSS010000002.1"/>
</dbReference>
<dbReference type="SMR" id="A5IBE7"/>
<dbReference type="KEGG" id="lpc:LPC_0719"/>
<dbReference type="HOGENOM" id="CLU_030571_4_1_6"/>
<dbReference type="UniPathway" id="UPA00619">
    <property type="reaction ID" value="UER00676"/>
</dbReference>
<dbReference type="GO" id="GO:0004416">
    <property type="term" value="F:hydroxyacylglutathione hydrolase activity"/>
    <property type="evidence" value="ECO:0007669"/>
    <property type="project" value="UniProtKB-UniRule"/>
</dbReference>
<dbReference type="GO" id="GO:0046872">
    <property type="term" value="F:metal ion binding"/>
    <property type="evidence" value="ECO:0007669"/>
    <property type="project" value="UniProtKB-KW"/>
</dbReference>
<dbReference type="GO" id="GO:0019243">
    <property type="term" value="P:methylglyoxal catabolic process to D-lactate via S-lactoyl-glutathione"/>
    <property type="evidence" value="ECO:0007669"/>
    <property type="project" value="InterPro"/>
</dbReference>
<dbReference type="CDD" id="cd07723">
    <property type="entry name" value="hydroxyacylglutathione_hydrolase_MBL-fold"/>
    <property type="match status" value="1"/>
</dbReference>
<dbReference type="Gene3D" id="3.60.15.10">
    <property type="entry name" value="Ribonuclease Z/Hydroxyacylglutathione hydrolase-like"/>
    <property type="match status" value="1"/>
</dbReference>
<dbReference type="HAMAP" id="MF_01374">
    <property type="entry name" value="Glyoxalase_2"/>
    <property type="match status" value="1"/>
</dbReference>
<dbReference type="InterPro" id="IPR035680">
    <property type="entry name" value="Clx_II_MBL"/>
</dbReference>
<dbReference type="InterPro" id="IPR050110">
    <property type="entry name" value="Glyoxalase_II_hydrolase"/>
</dbReference>
<dbReference type="InterPro" id="IPR032282">
    <property type="entry name" value="HAGH_C"/>
</dbReference>
<dbReference type="InterPro" id="IPR017782">
    <property type="entry name" value="Hydroxyacylglutathione_Hdrlase"/>
</dbReference>
<dbReference type="InterPro" id="IPR001279">
    <property type="entry name" value="Metallo-B-lactamas"/>
</dbReference>
<dbReference type="InterPro" id="IPR036866">
    <property type="entry name" value="RibonucZ/Hydroxyglut_hydro"/>
</dbReference>
<dbReference type="NCBIfam" id="TIGR03413">
    <property type="entry name" value="GSH_gloB"/>
    <property type="match status" value="1"/>
</dbReference>
<dbReference type="PANTHER" id="PTHR43705">
    <property type="entry name" value="HYDROXYACYLGLUTATHIONE HYDROLASE"/>
    <property type="match status" value="1"/>
</dbReference>
<dbReference type="PANTHER" id="PTHR43705:SF1">
    <property type="entry name" value="HYDROXYACYLGLUTATHIONE HYDROLASE GLOB"/>
    <property type="match status" value="1"/>
</dbReference>
<dbReference type="Pfam" id="PF16123">
    <property type="entry name" value="HAGH_C"/>
    <property type="match status" value="1"/>
</dbReference>
<dbReference type="Pfam" id="PF00753">
    <property type="entry name" value="Lactamase_B"/>
    <property type="match status" value="1"/>
</dbReference>
<dbReference type="PIRSF" id="PIRSF005457">
    <property type="entry name" value="Glx"/>
    <property type="match status" value="1"/>
</dbReference>
<dbReference type="SMART" id="SM00849">
    <property type="entry name" value="Lactamase_B"/>
    <property type="match status" value="1"/>
</dbReference>
<dbReference type="SUPFAM" id="SSF56281">
    <property type="entry name" value="Metallo-hydrolase/oxidoreductase"/>
    <property type="match status" value="1"/>
</dbReference>
<name>GLO2_LEGPC</name>
<reference key="1">
    <citation type="submission" date="2006-11" db="EMBL/GenBank/DDBJ databases">
        <title>Identification and characterization of a new conjugation/ type IVA secretion system (trb/tra) of L. pneumophila Corby localized on a mobile genomic island.</title>
        <authorList>
            <person name="Gloeckner G."/>
            <person name="Albert-Weissenberger C."/>
            <person name="Weinmann E."/>
            <person name="Jacobi S."/>
            <person name="Schunder E."/>
            <person name="Steinert M."/>
            <person name="Buchrieser C."/>
            <person name="Hacker J."/>
            <person name="Heuner K."/>
        </authorList>
    </citation>
    <scope>NUCLEOTIDE SEQUENCE [LARGE SCALE GENOMIC DNA]</scope>
    <source>
        <strain>Corby</strain>
    </source>
</reference>
<feature type="chain" id="PRO_1000068221" description="Hydroxyacylglutathione hydrolase">
    <location>
        <begin position="1"/>
        <end position="254"/>
    </location>
</feature>
<feature type="binding site" evidence="1">
    <location>
        <position position="54"/>
    </location>
    <ligand>
        <name>Zn(2+)</name>
        <dbReference type="ChEBI" id="CHEBI:29105"/>
        <label>1</label>
    </ligand>
</feature>
<feature type="binding site" evidence="1">
    <location>
        <position position="56"/>
    </location>
    <ligand>
        <name>Zn(2+)</name>
        <dbReference type="ChEBI" id="CHEBI:29105"/>
        <label>1</label>
    </ligand>
</feature>
<feature type="binding site" evidence="1">
    <location>
        <position position="58"/>
    </location>
    <ligand>
        <name>Zn(2+)</name>
        <dbReference type="ChEBI" id="CHEBI:29105"/>
        <label>2</label>
    </ligand>
</feature>
<feature type="binding site" evidence="1">
    <location>
        <position position="59"/>
    </location>
    <ligand>
        <name>Zn(2+)</name>
        <dbReference type="ChEBI" id="CHEBI:29105"/>
        <label>2</label>
    </ligand>
</feature>
<feature type="binding site" evidence="1">
    <location>
        <position position="111"/>
    </location>
    <ligand>
        <name>Zn(2+)</name>
        <dbReference type="ChEBI" id="CHEBI:29105"/>
        <label>1</label>
    </ligand>
</feature>
<feature type="binding site" evidence="1">
    <location>
        <position position="130"/>
    </location>
    <ligand>
        <name>Zn(2+)</name>
        <dbReference type="ChEBI" id="CHEBI:29105"/>
        <label>1</label>
    </ligand>
</feature>
<feature type="binding site" evidence="1">
    <location>
        <position position="130"/>
    </location>
    <ligand>
        <name>Zn(2+)</name>
        <dbReference type="ChEBI" id="CHEBI:29105"/>
        <label>2</label>
    </ligand>
</feature>
<feature type="binding site" evidence="1">
    <location>
        <position position="168"/>
    </location>
    <ligand>
        <name>Zn(2+)</name>
        <dbReference type="ChEBI" id="CHEBI:29105"/>
        <label>2</label>
    </ligand>
</feature>
<gene>
    <name evidence="1" type="primary">gloB</name>
    <name type="ordered locus">LPC_0719</name>
</gene>
<evidence type="ECO:0000255" key="1">
    <source>
        <dbReference type="HAMAP-Rule" id="MF_01374"/>
    </source>
</evidence>